<organism>
    <name type="scientific">Rickettsia typhi (strain ATCC VR-144 / Wilmington)</name>
    <dbReference type="NCBI Taxonomy" id="257363"/>
    <lineage>
        <taxon>Bacteria</taxon>
        <taxon>Pseudomonadati</taxon>
        <taxon>Pseudomonadota</taxon>
        <taxon>Alphaproteobacteria</taxon>
        <taxon>Rickettsiales</taxon>
        <taxon>Rickettsiaceae</taxon>
        <taxon>Rickettsieae</taxon>
        <taxon>Rickettsia</taxon>
        <taxon>typhus group</taxon>
    </lineage>
</organism>
<comment type="catalytic activity">
    <reaction>
        <text>a uridine in RNA = a pseudouridine in RNA</text>
        <dbReference type="Rhea" id="RHEA:48348"/>
        <dbReference type="Rhea" id="RHEA-COMP:12068"/>
        <dbReference type="Rhea" id="RHEA-COMP:12069"/>
        <dbReference type="ChEBI" id="CHEBI:65314"/>
        <dbReference type="ChEBI" id="CHEBI:65315"/>
    </reaction>
</comment>
<comment type="similarity">
    <text evidence="3">Belongs to the pseudouridine synthase RsuA family.</text>
</comment>
<accession>Q68WJ1</accession>
<reference key="1">
    <citation type="journal article" date="2004" name="J. Bacteriol.">
        <title>Complete genome sequence of Rickettsia typhi and comparison with sequences of other Rickettsiae.</title>
        <authorList>
            <person name="McLeod M.P."/>
            <person name="Qin X."/>
            <person name="Karpathy S.E."/>
            <person name="Gioia J."/>
            <person name="Highlander S.K."/>
            <person name="Fox G.E."/>
            <person name="McNeill T.Z."/>
            <person name="Jiang H."/>
            <person name="Muzny D."/>
            <person name="Jacob L.S."/>
            <person name="Hawes A.C."/>
            <person name="Sodergren E."/>
            <person name="Gill R."/>
            <person name="Hume J."/>
            <person name="Morgan M."/>
            <person name="Fan G."/>
            <person name="Amin A.G."/>
            <person name="Gibbs R.A."/>
            <person name="Hong C."/>
            <person name="Yu X.-J."/>
            <person name="Walker D.H."/>
            <person name="Weinstock G.M."/>
        </authorList>
    </citation>
    <scope>NUCLEOTIDE SEQUENCE [LARGE SCALE GENOMIC DNA]</scope>
    <source>
        <strain>ATCC VR-144 / Wilmington</strain>
    </source>
</reference>
<protein>
    <recommendedName>
        <fullName>Uncharacterized RNA pseudouridine synthase RT0532</fullName>
        <ecNumber>5.4.99.-</ecNumber>
    </recommendedName>
    <alternativeName>
        <fullName>RNA pseudouridylate synthase</fullName>
    </alternativeName>
    <alternativeName>
        <fullName>RNA-uridine isomerase</fullName>
    </alternativeName>
</protein>
<sequence length="242" mass="27756">MYRLAKIISNAGVCSRRNAEKLIVGGKVKIDGITILSPATNVDISNQIEVSGRLINNIQKPRLWIYYKPIGLITTHKDPLSRKTVFEQLIGLPRVISIGRLDLNSEGLLLLTNSGDLAHQFEMPSSKLKRVYNVRAYGNANFLLKNNYNNLKIDGIFYNPYSIKLLRQNKNNSWFEVVLFEGKNREIRRIFEYFGLKVNKLIRVQYGALKIGNLKPGDYKEISNKILKKIISNKLTNYIDNR</sequence>
<name>Y532_RICTY</name>
<proteinExistence type="inferred from homology"/>
<dbReference type="EC" id="5.4.99.-"/>
<dbReference type="EMBL" id="AE017197">
    <property type="protein sequence ID" value="AAU04001.1"/>
    <property type="molecule type" value="Genomic_DNA"/>
</dbReference>
<dbReference type="RefSeq" id="WP_011190982.1">
    <property type="nucleotide sequence ID" value="NC_006142.1"/>
</dbReference>
<dbReference type="SMR" id="Q68WJ1"/>
<dbReference type="KEGG" id="rty:RT0532"/>
<dbReference type="eggNOG" id="COG1187">
    <property type="taxonomic scope" value="Bacteria"/>
</dbReference>
<dbReference type="HOGENOM" id="CLU_024979_1_0_5"/>
<dbReference type="OrthoDB" id="9807213at2"/>
<dbReference type="Proteomes" id="UP000000604">
    <property type="component" value="Chromosome"/>
</dbReference>
<dbReference type="GO" id="GO:0003723">
    <property type="term" value="F:RNA binding"/>
    <property type="evidence" value="ECO:0007669"/>
    <property type="project" value="UniProtKB-KW"/>
</dbReference>
<dbReference type="GO" id="GO:0120159">
    <property type="term" value="F:rRNA pseudouridine synthase activity"/>
    <property type="evidence" value="ECO:0007669"/>
    <property type="project" value="UniProtKB-ARBA"/>
</dbReference>
<dbReference type="GO" id="GO:0000455">
    <property type="term" value="P:enzyme-directed rRNA pseudouridine synthesis"/>
    <property type="evidence" value="ECO:0007669"/>
    <property type="project" value="UniProtKB-ARBA"/>
</dbReference>
<dbReference type="CDD" id="cd00165">
    <property type="entry name" value="S4"/>
    <property type="match status" value="1"/>
</dbReference>
<dbReference type="Gene3D" id="3.30.70.1560">
    <property type="entry name" value="Alpha-L RNA-binding motif"/>
    <property type="match status" value="1"/>
</dbReference>
<dbReference type="Gene3D" id="3.30.70.580">
    <property type="entry name" value="Pseudouridine synthase I, catalytic domain, N-terminal subdomain"/>
    <property type="match status" value="1"/>
</dbReference>
<dbReference type="Gene3D" id="3.10.290.10">
    <property type="entry name" value="RNA-binding S4 domain"/>
    <property type="match status" value="1"/>
</dbReference>
<dbReference type="InterPro" id="IPR042092">
    <property type="entry name" value="PsdUridine_s_RsuA/RluB/E/F_cat"/>
</dbReference>
<dbReference type="InterPro" id="IPR020103">
    <property type="entry name" value="PsdUridine_synth_cat_dom_sf"/>
</dbReference>
<dbReference type="InterPro" id="IPR006145">
    <property type="entry name" value="PsdUridine_synth_RsuA/RluA"/>
</dbReference>
<dbReference type="InterPro" id="IPR000748">
    <property type="entry name" value="PsdUridine_synth_RsuA/RluB/E/F"/>
</dbReference>
<dbReference type="InterPro" id="IPR018496">
    <property type="entry name" value="PsdUridine_synth_RsuA/RluB_CS"/>
</dbReference>
<dbReference type="InterPro" id="IPR050343">
    <property type="entry name" value="RsuA_PseudoU_synthase"/>
</dbReference>
<dbReference type="InterPro" id="IPR002942">
    <property type="entry name" value="S4_RNA-bd"/>
</dbReference>
<dbReference type="InterPro" id="IPR036986">
    <property type="entry name" value="S4_RNA-bd_sf"/>
</dbReference>
<dbReference type="InterPro" id="IPR020094">
    <property type="entry name" value="TruA/RsuA/RluB/E/F_N"/>
</dbReference>
<dbReference type="NCBIfam" id="TIGR00093">
    <property type="entry name" value="pseudouridine synthase"/>
    <property type="match status" value="1"/>
</dbReference>
<dbReference type="PANTHER" id="PTHR47683">
    <property type="entry name" value="PSEUDOURIDINE SYNTHASE FAMILY PROTEIN-RELATED"/>
    <property type="match status" value="1"/>
</dbReference>
<dbReference type="PANTHER" id="PTHR47683:SF3">
    <property type="entry name" value="RIBOSOMAL LARGE SUBUNIT PSEUDOURIDINE SYNTHASE B"/>
    <property type="match status" value="1"/>
</dbReference>
<dbReference type="Pfam" id="PF00849">
    <property type="entry name" value="PseudoU_synth_2"/>
    <property type="match status" value="1"/>
</dbReference>
<dbReference type="Pfam" id="PF01479">
    <property type="entry name" value="S4"/>
    <property type="match status" value="1"/>
</dbReference>
<dbReference type="SMART" id="SM00363">
    <property type="entry name" value="S4"/>
    <property type="match status" value="1"/>
</dbReference>
<dbReference type="SUPFAM" id="SSF55174">
    <property type="entry name" value="Alpha-L RNA-binding motif"/>
    <property type="match status" value="1"/>
</dbReference>
<dbReference type="SUPFAM" id="SSF55120">
    <property type="entry name" value="Pseudouridine synthase"/>
    <property type="match status" value="1"/>
</dbReference>
<dbReference type="PROSITE" id="PS01149">
    <property type="entry name" value="PSI_RSU"/>
    <property type="match status" value="1"/>
</dbReference>
<dbReference type="PROSITE" id="PS50889">
    <property type="entry name" value="S4"/>
    <property type="match status" value="1"/>
</dbReference>
<gene>
    <name type="ordered locus">RT0532</name>
</gene>
<keyword id="KW-0413">Isomerase</keyword>
<keyword id="KW-0694">RNA-binding</keyword>
<evidence type="ECO:0000250" key="1"/>
<evidence type="ECO:0000255" key="2">
    <source>
        <dbReference type="PROSITE-ProRule" id="PRU00182"/>
    </source>
</evidence>
<evidence type="ECO:0000305" key="3"/>
<feature type="chain" id="PRO_0000294477" description="Uncharacterized RNA pseudouridine synthase RT0532">
    <location>
        <begin position="1"/>
        <end position="242"/>
    </location>
</feature>
<feature type="domain" description="S4 RNA-binding" evidence="2">
    <location>
        <begin position="2"/>
        <end position="69"/>
    </location>
</feature>
<feature type="active site" description="Nucleophile" evidence="1">
    <location>
        <position position="102"/>
    </location>
</feature>